<feature type="chain" id="PRO_0000447449" description="Sodium channel neurotoxin MeuNaTxalpha-7" evidence="6">
    <location>
        <begin position="1"/>
        <end position="64"/>
    </location>
</feature>
<feature type="domain" description="LCN-type CS-alpha/beta" evidence="2">
    <location>
        <begin position="2"/>
        <end position="64"/>
    </location>
</feature>
<feature type="modified residue" description="Asparagine amide" evidence="6">
    <location>
        <position position="64"/>
    </location>
</feature>
<feature type="disulfide bond" evidence="1">
    <location>
        <begin position="12"/>
        <end position="63"/>
    </location>
</feature>
<feature type="disulfide bond" evidence="1">
    <location>
        <begin position="16"/>
        <end position="36"/>
    </location>
</feature>
<feature type="disulfide bond" evidence="1">
    <location>
        <begin position="22"/>
        <end position="46"/>
    </location>
</feature>
<feature type="disulfide bond" evidence="1">
    <location>
        <begin position="26"/>
        <end position="48"/>
    </location>
</feature>
<reference key="1">
    <citation type="journal article" date="2012" name="Mol. Cell. Proteomics">
        <title>Evolutionary diversification of Mesobuthus alpha-scorpion toxins affecting sodium channels.</title>
        <authorList>
            <person name="Zhu S."/>
            <person name="Peigneur S."/>
            <person name="Gao B."/>
            <person name="Lu X."/>
            <person name="Cao C."/>
            <person name="Tytgat J."/>
        </authorList>
    </citation>
    <scope>NUCLEOTIDE SEQUENCE [MRNA]</scope>
    <scope>PROBABLE AMIDATION AT ASN-64</scope>
    <source>
        <tissue>Venom gland</tissue>
    </source>
</reference>
<name>SCXN7_MESEU</name>
<sequence length="66" mass="7371">ARDGYIADDKNCAYFCGRNAYCDEECKKKGAESGYCQWAGQYGNACWCYKLPDKVPIKVSGKCNGR</sequence>
<keyword id="KW-0027">Amidation</keyword>
<keyword id="KW-1015">Disulfide bond</keyword>
<keyword id="KW-0872">Ion channel impairing toxin</keyword>
<keyword id="KW-0528">Neurotoxin</keyword>
<keyword id="KW-0964">Secreted</keyword>
<keyword id="KW-0800">Toxin</keyword>
<keyword id="KW-0738">Voltage-gated sodium channel impairing toxin</keyword>
<protein>
    <recommendedName>
        <fullName evidence="4">Sodium channel neurotoxin MeuNaTxalpha-7</fullName>
    </recommendedName>
</protein>
<dbReference type="EMBL" id="GQ249198">
    <property type="protein sequence ID" value="ADF49570.1"/>
    <property type="molecule type" value="mRNA"/>
</dbReference>
<dbReference type="SMR" id="D8UWD3"/>
<dbReference type="GO" id="GO:0005576">
    <property type="term" value="C:extracellular region"/>
    <property type="evidence" value="ECO:0007669"/>
    <property type="project" value="UniProtKB-SubCell"/>
</dbReference>
<dbReference type="GO" id="GO:0019871">
    <property type="term" value="F:sodium channel inhibitor activity"/>
    <property type="evidence" value="ECO:0007669"/>
    <property type="project" value="InterPro"/>
</dbReference>
<dbReference type="GO" id="GO:0090729">
    <property type="term" value="F:toxin activity"/>
    <property type="evidence" value="ECO:0007669"/>
    <property type="project" value="UniProtKB-KW"/>
</dbReference>
<dbReference type="GO" id="GO:0006952">
    <property type="term" value="P:defense response"/>
    <property type="evidence" value="ECO:0007669"/>
    <property type="project" value="InterPro"/>
</dbReference>
<dbReference type="CDD" id="cd23106">
    <property type="entry name" value="neurotoxins_LC_scorpion"/>
    <property type="match status" value="1"/>
</dbReference>
<dbReference type="FunFam" id="3.30.30.10:FF:000002">
    <property type="entry name" value="Alpha-like toxin BmK-M1"/>
    <property type="match status" value="1"/>
</dbReference>
<dbReference type="Gene3D" id="3.30.30.10">
    <property type="entry name" value="Knottin, scorpion toxin-like"/>
    <property type="match status" value="1"/>
</dbReference>
<dbReference type="InterPro" id="IPR044062">
    <property type="entry name" value="LCN-type_CS_alpha_beta_dom"/>
</dbReference>
<dbReference type="InterPro" id="IPR003614">
    <property type="entry name" value="Scorpion_toxin-like"/>
</dbReference>
<dbReference type="InterPro" id="IPR036574">
    <property type="entry name" value="Scorpion_toxin-like_sf"/>
</dbReference>
<dbReference type="InterPro" id="IPR018218">
    <property type="entry name" value="Scorpion_toxinL"/>
</dbReference>
<dbReference type="InterPro" id="IPR002061">
    <property type="entry name" value="Scorpion_toxinL/defensin"/>
</dbReference>
<dbReference type="Pfam" id="PF00537">
    <property type="entry name" value="Toxin_3"/>
    <property type="match status" value="1"/>
</dbReference>
<dbReference type="PRINTS" id="PR00285">
    <property type="entry name" value="SCORPNTOXIN"/>
</dbReference>
<dbReference type="PRINTS" id="PR00284">
    <property type="entry name" value="TOXIN"/>
</dbReference>
<dbReference type="SMART" id="SM00505">
    <property type="entry name" value="Knot1"/>
    <property type="match status" value="1"/>
</dbReference>
<dbReference type="SUPFAM" id="SSF57095">
    <property type="entry name" value="Scorpion toxin-like"/>
    <property type="match status" value="1"/>
</dbReference>
<dbReference type="PROSITE" id="PS51863">
    <property type="entry name" value="LCN_CSAB"/>
    <property type="match status" value="1"/>
</dbReference>
<accession>D8UWD3</accession>
<organism>
    <name type="scientific">Mesobuthus eupeus</name>
    <name type="common">Lesser Asian scorpion</name>
    <name type="synonym">Buthus eupeus</name>
    <dbReference type="NCBI Taxonomy" id="34648"/>
    <lineage>
        <taxon>Eukaryota</taxon>
        <taxon>Metazoa</taxon>
        <taxon>Ecdysozoa</taxon>
        <taxon>Arthropoda</taxon>
        <taxon>Chelicerata</taxon>
        <taxon>Arachnida</taxon>
        <taxon>Scorpiones</taxon>
        <taxon>Buthida</taxon>
        <taxon>Buthoidea</taxon>
        <taxon>Buthidae</taxon>
        <taxon>Mesobuthus</taxon>
    </lineage>
</organism>
<evidence type="ECO:0000250" key="1">
    <source>
        <dbReference type="UniProtKB" id="P86405"/>
    </source>
</evidence>
<evidence type="ECO:0000255" key="2">
    <source>
        <dbReference type="PROSITE-ProRule" id="PRU01210"/>
    </source>
</evidence>
<evidence type="ECO:0000269" key="3">
    <source>
    </source>
</evidence>
<evidence type="ECO:0000303" key="4">
    <source>
    </source>
</evidence>
<evidence type="ECO:0000305" key="5"/>
<evidence type="ECO:0000305" key="6">
    <source>
    </source>
</evidence>
<comment type="function">
    <text evidence="1">Alpha toxins bind voltage-independently at site-3 of sodium channels (Nav) and inhibit the inactivation of the activated channels, thereby blocking neuronal transmission.</text>
</comment>
<comment type="subcellular location">
    <subcellularLocation>
        <location evidence="3">Secreted</location>
    </subcellularLocation>
</comment>
<comment type="tissue specificity">
    <text evidence="6">Expressed by the venom gland.</text>
</comment>
<comment type="domain">
    <text evidence="5">Has the structural arrangement of an alpha-helix connected to antiparallel beta-sheets by disulfide bonds (CS-alpha/beta).</text>
</comment>
<comment type="similarity">
    <text evidence="5">Belongs to the long (4 C-C) scorpion toxin superfamily. Sodium channel inhibitor family. Alpha subfamily.</text>
</comment>
<proteinExistence type="evidence at protein level"/>